<gene>
    <name type="primary">Ube2g1</name>
    <name type="synonym">Ube2g</name>
</gene>
<feature type="chain" id="PRO_0000424516" description="Ubiquitin-conjugating enzyme E2 G1">
    <location>
        <begin position="1"/>
        <end position="170"/>
    </location>
</feature>
<feature type="initiator methionine" description="Removed; alternate" evidence="1">
    <location>
        <position position="1"/>
    </location>
</feature>
<feature type="chain" id="PRO_0000082481" description="Ubiquitin-conjugating enzyme E2 G1, N-terminally processed">
    <location>
        <begin position="2"/>
        <end position="170"/>
    </location>
</feature>
<feature type="domain" description="UBC core" evidence="2">
    <location>
        <begin position="5"/>
        <end position="166"/>
    </location>
</feature>
<feature type="active site" description="Glycyl thioester intermediate" evidence="2 3">
    <location>
        <position position="90"/>
    </location>
</feature>
<feature type="modified residue" description="N-acetylmethionine" evidence="1">
    <location>
        <position position="1"/>
    </location>
</feature>
<feature type="modified residue" description="N-acetylthreonine; in Ubiquitin-conjugating enzyme E2 G1, N-terminally processed" evidence="1">
    <location>
        <position position="2"/>
    </location>
</feature>
<name>UB2G1_MOUSE</name>
<sequence>MTELQSALLLRRQLAELNKNPVEGFSAGLIDDNDLYRWEVLIIGPPDTLYEGGVFKAHLTFPKDYPLRPPKMKFITEIWHPNVDKNGDVCISILHEPGEDKYGYEKPEERWLPIHTVETIMISVISMLADPNGDSPANVDAAKEWREDRNGEFKRKVARCVRKSQETAFE</sequence>
<comment type="function">
    <text evidence="1">Accepts ubiquitin from the E1 complex and catalyzes its covalent attachment to other proteins. In vitro catalyzes 'Lys-48'-, as well as 'Lys-63'-linked polyubiquitination. May be involved in degradation of muscle-specific proteins. Mediates polyubiquitination of CYP3A4.</text>
</comment>
<comment type="catalytic activity">
    <reaction evidence="1 2 3">
        <text>S-ubiquitinyl-[E1 ubiquitin-activating enzyme]-L-cysteine + [E2 ubiquitin-conjugating enzyme]-L-cysteine = [E1 ubiquitin-activating enzyme]-L-cysteine + S-ubiquitinyl-[E2 ubiquitin-conjugating enzyme]-L-cysteine.</text>
        <dbReference type="EC" id="2.3.2.23"/>
    </reaction>
</comment>
<comment type="pathway">
    <text evidence="2">Protein modification; protein ubiquitination.</text>
</comment>
<comment type="PTM">
    <text evidence="1">Autoubiquitinated.</text>
</comment>
<comment type="similarity">
    <text evidence="2">Belongs to the ubiquitin-conjugating enzyme family.</text>
</comment>
<accession>P62254</accession>
<accession>Q4VAA6</accession>
<accession>Q99462</accession>
<evidence type="ECO:0000250" key="1">
    <source>
        <dbReference type="UniProtKB" id="P62253"/>
    </source>
</evidence>
<evidence type="ECO:0000255" key="2">
    <source>
        <dbReference type="PROSITE-ProRule" id="PRU00388"/>
    </source>
</evidence>
<evidence type="ECO:0000255" key="3">
    <source>
        <dbReference type="PROSITE-ProRule" id="PRU10133"/>
    </source>
</evidence>
<reference key="1">
    <citation type="journal article" date="2005" name="Science">
        <title>The transcriptional landscape of the mammalian genome.</title>
        <authorList>
            <person name="Carninci P."/>
            <person name="Kasukawa T."/>
            <person name="Katayama S."/>
            <person name="Gough J."/>
            <person name="Frith M.C."/>
            <person name="Maeda N."/>
            <person name="Oyama R."/>
            <person name="Ravasi T."/>
            <person name="Lenhard B."/>
            <person name="Wells C."/>
            <person name="Kodzius R."/>
            <person name="Shimokawa K."/>
            <person name="Bajic V.B."/>
            <person name="Brenner S.E."/>
            <person name="Batalov S."/>
            <person name="Forrest A.R."/>
            <person name="Zavolan M."/>
            <person name="Davis M.J."/>
            <person name="Wilming L.G."/>
            <person name="Aidinis V."/>
            <person name="Allen J.E."/>
            <person name="Ambesi-Impiombato A."/>
            <person name="Apweiler R."/>
            <person name="Aturaliya R.N."/>
            <person name="Bailey T.L."/>
            <person name="Bansal M."/>
            <person name="Baxter L."/>
            <person name="Beisel K.W."/>
            <person name="Bersano T."/>
            <person name="Bono H."/>
            <person name="Chalk A.M."/>
            <person name="Chiu K.P."/>
            <person name="Choudhary V."/>
            <person name="Christoffels A."/>
            <person name="Clutterbuck D.R."/>
            <person name="Crowe M.L."/>
            <person name="Dalla E."/>
            <person name="Dalrymple B.P."/>
            <person name="de Bono B."/>
            <person name="Della Gatta G."/>
            <person name="di Bernardo D."/>
            <person name="Down T."/>
            <person name="Engstrom P."/>
            <person name="Fagiolini M."/>
            <person name="Faulkner G."/>
            <person name="Fletcher C.F."/>
            <person name="Fukushima T."/>
            <person name="Furuno M."/>
            <person name="Futaki S."/>
            <person name="Gariboldi M."/>
            <person name="Georgii-Hemming P."/>
            <person name="Gingeras T.R."/>
            <person name="Gojobori T."/>
            <person name="Green R.E."/>
            <person name="Gustincich S."/>
            <person name="Harbers M."/>
            <person name="Hayashi Y."/>
            <person name="Hensch T.K."/>
            <person name="Hirokawa N."/>
            <person name="Hill D."/>
            <person name="Huminiecki L."/>
            <person name="Iacono M."/>
            <person name="Ikeo K."/>
            <person name="Iwama A."/>
            <person name="Ishikawa T."/>
            <person name="Jakt M."/>
            <person name="Kanapin A."/>
            <person name="Katoh M."/>
            <person name="Kawasawa Y."/>
            <person name="Kelso J."/>
            <person name="Kitamura H."/>
            <person name="Kitano H."/>
            <person name="Kollias G."/>
            <person name="Krishnan S.P."/>
            <person name="Kruger A."/>
            <person name="Kummerfeld S.K."/>
            <person name="Kurochkin I.V."/>
            <person name="Lareau L.F."/>
            <person name="Lazarevic D."/>
            <person name="Lipovich L."/>
            <person name="Liu J."/>
            <person name="Liuni S."/>
            <person name="McWilliam S."/>
            <person name="Madan Babu M."/>
            <person name="Madera M."/>
            <person name="Marchionni L."/>
            <person name="Matsuda H."/>
            <person name="Matsuzawa S."/>
            <person name="Miki H."/>
            <person name="Mignone F."/>
            <person name="Miyake S."/>
            <person name="Morris K."/>
            <person name="Mottagui-Tabar S."/>
            <person name="Mulder N."/>
            <person name="Nakano N."/>
            <person name="Nakauchi H."/>
            <person name="Ng P."/>
            <person name="Nilsson R."/>
            <person name="Nishiguchi S."/>
            <person name="Nishikawa S."/>
            <person name="Nori F."/>
            <person name="Ohara O."/>
            <person name="Okazaki Y."/>
            <person name="Orlando V."/>
            <person name="Pang K.C."/>
            <person name="Pavan W.J."/>
            <person name="Pavesi G."/>
            <person name="Pesole G."/>
            <person name="Petrovsky N."/>
            <person name="Piazza S."/>
            <person name="Reed J."/>
            <person name="Reid J.F."/>
            <person name="Ring B.Z."/>
            <person name="Ringwald M."/>
            <person name="Rost B."/>
            <person name="Ruan Y."/>
            <person name="Salzberg S.L."/>
            <person name="Sandelin A."/>
            <person name="Schneider C."/>
            <person name="Schoenbach C."/>
            <person name="Sekiguchi K."/>
            <person name="Semple C.A."/>
            <person name="Seno S."/>
            <person name="Sessa L."/>
            <person name="Sheng Y."/>
            <person name="Shibata Y."/>
            <person name="Shimada H."/>
            <person name="Shimada K."/>
            <person name="Silva D."/>
            <person name="Sinclair B."/>
            <person name="Sperling S."/>
            <person name="Stupka E."/>
            <person name="Sugiura K."/>
            <person name="Sultana R."/>
            <person name="Takenaka Y."/>
            <person name="Taki K."/>
            <person name="Tammoja K."/>
            <person name="Tan S.L."/>
            <person name="Tang S."/>
            <person name="Taylor M.S."/>
            <person name="Tegner J."/>
            <person name="Teichmann S.A."/>
            <person name="Ueda H.R."/>
            <person name="van Nimwegen E."/>
            <person name="Verardo R."/>
            <person name="Wei C.L."/>
            <person name="Yagi K."/>
            <person name="Yamanishi H."/>
            <person name="Zabarovsky E."/>
            <person name="Zhu S."/>
            <person name="Zimmer A."/>
            <person name="Hide W."/>
            <person name="Bult C."/>
            <person name="Grimmond S.M."/>
            <person name="Teasdale R.D."/>
            <person name="Liu E.T."/>
            <person name="Brusic V."/>
            <person name="Quackenbush J."/>
            <person name="Wahlestedt C."/>
            <person name="Mattick J.S."/>
            <person name="Hume D.A."/>
            <person name="Kai C."/>
            <person name="Sasaki D."/>
            <person name="Tomaru Y."/>
            <person name="Fukuda S."/>
            <person name="Kanamori-Katayama M."/>
            <person name="Suzuki M."/>
            <person name="Aoki J."/>
            <person name="Arakawa T."/>
            <person name="Iida J."/>
            <person name="Imamura K."/>
            <person name="Itoh M."/>
            <person name="Kato T."/>
            <person name="Kawaji H."/>
            <person name="Kawagashira N."/>
            <person name="Kawashima T."/>
            <person name="Kojima M."/>
            <person name="Kondo S."/>
            <person name="Konno H."/>
            <person name="Nakano K."/>
            <person name="Ninomiya N."/>
            <person name="Nishio T."/>
            <person name="Okada M."/>
            <person name="Plessy C."/>
            <person name="Shibata K."/>
            <person name="Shiraki T."/>
            <person name="Suzuki S."/>
            <person name="Tagami M."/>
            <person name="Waki K."/>
            <person name="Watahiki A."/>
            <person name="Okamura-Oho Y."/>
            <person name="Suzuki H."/>
            <person name="Kawai J."/>
            <person name="Hayashizaki Y."/>
        </authorList>
    </citation>
    <scope>NUCLEOTIDE SEQUENCE [LARGE SCALE MRNA]</scope>
    <source>
        <strain>C57BL/6J</strain>
        <tissue>Head</tissue>
    </source>
</reference>
<reference key="2">
    <citation type="journal article" date="2004" name="Genome Res.">
        <title>The status, quality, and expansion of the NIH full-length cDNA project: the Mammalian Gene Collection (MGC).</title>
        <authorList>
            <consortium name="The MGC Project Team"/>
        </authorList>
    </citation>
    <scope>NUCLEOTIDE SEQUENCE [LARGE SCALE MRNA]</scope>
    <source>
        <tissue>Eye</tissue>
    </source>
</reference>
<reference key="3">
    <citation type="journal article" date="2010" name="Cell">
        <title>A tissue-specific atlas of mouse protein phosphorylation and expression.</title>
        <authorList>
            <person name="Huttlin E.L."/>
            <person name="Jedrychowski M.P."/>
            <person name="Elias J.E."/>
            <person name="Goswami T."/>
            <person name="Rad R."/>
            <person name="Beausoleil S.A."/>
            <person name="Villen J."/>
            <person name="Haas W."/>
            <person name="Sowa M.E."/>
            <person name="Gygi S.P."/>
        </authorList>
    </citation>
    <scope>IDENTIFICATION BY MASS SPECTROMETRY [LARGE SCALE ANALYSIS]</scope>
    <source>
        <tissue>Brain</tissue>
        <tissue>Brown adipose tissue</tissue>
        <tissue>Heart</tissue>
        <tissue>Kidney</tissue>
        <tissue>Liver</tissue>
        <tissue>Lung</tissue>
        <tissue>Pancreas</tissue>
        <tissue>Spleen</tissue>
        <tissue>Testis</tissue>
    </source>
</reference>
<proteinExistence type="evidence at protein level"/>
<organism>
    <name type="scientific">Mus musculus</name>
    <name type="common">Mouse</name>
    <dbReference type="NCBI Taxonomy" id="10090"/>
    <lineage>
        <taxon>Eukaryota</taxon>
        <taxon>Metazoa</taxon>
        <taxon>Chordata</taxon>
        <taxon>Craniata</taxon>
        <taxon>Vertebrata</taxon>
        <taxon>Euteleostomi</taxon>
        <taxon>Mammalia</taxon>
        <taxon>Eutheria</taxon>
        <taxon>Euarchontoglires</taxon>
        <taxon>Glires</taxon>
        <taxon>Rodentia</taxon>
        <taxon>Myomorpha</taxon>
        <taxon>Muroidea</taxon>
        <taxon>Muridae</taxon>
        <taxon>Murinae</taxon>
        <taxon>Mus</taxon>
        <taxon>Mus</taxon>
    </lineage>
</organism>
<dbReference type="EC" id="2.3.2.23"/>
<dbReference type="EMBL" id="AK013902">
    <property type="protein sequence ID" value="BAB29048.1"/>
    <property type="molecule type" value="mRNA"/>
</dbReference>
<dbReference type="EMBL" id="BC096474">
    <property type="protein sequence ID" value="AAH96474.1"/>
    <property type="molecule type" value="mRNA"/>
</dbReference>
<dbReference type="CCDS" id="CCDS36217.1"/>
<dbReference type="RefSeq" id="NP_080261.2">
    <property type="nucleotide sequence ID" value="NM_025985.4"/>
</dbReference>
<dbReference type="SMR" id="P62254"/>
<dbReference type="BioGRID" id="211962">
    <property type="interactions" value="5"/>
</dbReference>
<dbReference type="FunCoup" id="P62254">
    <property type="interactions" value="3105"/>
</dbReference>
<dbReference type="IntAct" id="P62254">
    <property type="interactions" value="1"/>
</dbReference>
<dbReference type="MINT" id="P62254"/>
<dbReference type="STRING" id="10090.ENSMUSP00000021148"/>
<dbReference type="iPTMnet" id="P62254"/>
<dbReference type="PhosphoSitePlus" id="P62254"/>
<dbReference type="SwissPalm" id="P62254"/>
<dbReference type="REPRODUCTION-2DPAGE" id="IPI00310850"/>
<dbReference type="REPRODUCTION-2DPAGE" id="P62254"/>
<dbReference type="jPOST" id="P62254"/>
<dbReference type="PaxDb" id="10090-ENSMUSP00000021148"/>
<dbReference type="PeptideAtlas" id="P62254"/>
<dbReference type="ProteomicsDB" id="297774"/>
<dbReference type="Pumba" id="P62254"/>
<dbReference type="Antibodypedia" id="1153">
    <property type="antibodies" value="235 antibodies from 31 providers"/>
</dbReference>
<dbReference type="DNASU" id="67128"/>
<dbReference type="Ensembl" id="ENSMUST00000021148.13">
    <property type="protein sequence ID" value="ENSMUSP00000021148.7"/>
    <property type="gene ID" value="ENSMUSG00000020794.14"/>
</dbReference>
<dbReference type="GeneID" id="67128"/>
<dbReference type="KEGG" id="mmu:67128"/>
<dbReference type="UCSC" id="uc007jzc.1">
    <property type="organism name" value="mouse"/>
</dbReference>
<dbReference type="AGR" id="MGI:1914378"/>
<dbReference type="CTD" id="7326"/>
<dbReference type="MGI" id="MGI:1914378">
    <property type="gene designation" value="Ube2g1"/>
</dbReference>
<dbReference type="VEuPathDB" id="HostDB:ENSMUSG00000020794"/>
<dbReference type="eggNOG" id="KOG0425">
    <property type="taxonomic scope" value="Eukaryota"/>
</dbReference>
<dbReference type="GeneTree" id="ENSGT00940000155228"/>
<dbReference type="HOGENOM" id="CLU_030988_10_1_1"/>
<dbReference type="InParanoid" id="P62254"/>
<dbReference type="OMA" id="MFEWEVM"/>
<dbReference type="OrthoDB" id="19692at2759"/>
<dbReference type="PhylomeDB" id="P62254"/>
<dbReference type="TreeFam" id="TF101118"/>
<dbReference type="Reactome" id="R-MMU-8866652">
    <property type="pathway name" value="Synthesis of active ubiquitin: roles of E1 and E2 enzymes"/>
</dbReference>
<dbReference type="Reactome" id="R-MMU-983168">
    <property type="pathway name" value="Antigen processing: Ubiquitination &amp; Proteasome degradation"/>
</dbReference>
<dbReference type="UniPathway" id="UPA00143"/>
<dbReference type="BioGRID-ORCS" id="67128">
    <property type="hits" value="4 hits in 77 CRISPR screens"/>
</dbReference>
<dbReference type="ChiTaRS" id="Ube2g1">
    <property type="organism name" value="mouse"/>
</dbReference>
<dbReference type="PRO" id="PR:P62254"/>
<dbReference type="Proteomes" id="UP000000589">
    <property type="component" value="Chromosome 11"/>
</dbReference>
<dbReference type="RNAct" id="P62254">
    <property type="molecule type" value="protein"/>
</dbReference>
<dbReference type="Bgee" id="ENSMUSG00000020794">
    <property type="expression patterns" value="Expressed in primary oocyte and 273 other cell types or tissues"/>
</dbReference>
<dbReference type="ExpressionAtlas" id="P62254">
    <property type="expression patterns" value="baseline and differential"/>
</dbReference>
<dbReference type="GO" id="GO:0005524">
    <property type="term" value="F:ATP binding"/>
    <property type="evidence" value="ECO:0007669"/>
    <property type="project" value="UniProtKB-KW"/>
</dbReference>
<dbReference type="GO" id="GO:0061631">
    <property type="term" value="F:ubiquitin conjugating enzyme activity"/>
    <property type="evidence" value="ECO:0000266"/>
    <property type="project" value="MGI"/>
</dbReference>
<dbReference type="GO" id="GO:0031625">
    <property type="term" value="F:ubiquitin protein ligase binding"/>
    <property type="evidence" value="ECO:0007669"/>
    <property type="project" value="Ensembl"/>
</dbReference>
<dbReference type="GO" id="GO:0004842">
    <property type="term" value="F:ubiquitin-protein transferase activity"/>
    <property type="evidence" value="ECO:0000250"/>
    <property type="project" value="UniProtKB"/>
</dbReference>
<dbReference type="GO" id="GO:0030163">
    <property type="term" value="P:protein catabolic process"/>
    <property type="evidence" value="ECO:0000266"/>
    <property type="project" value="MGI"/>
</dbReference>
<dbReference type="GO" id="GO:0070936">
    <property type="term" value="P:protein K48-linked ubiquitination"/>
    <property type="evidence" value="ECO:0000314"/>
    <property type="project" value="ParkinsonsUK-UCL"/>
</dbReference>
<dbReference type="GO" id="GO:0070534">
    <property type="term" value="P:protein K63-linked ubiquitination"/>
    <property type="evidence" value="ECO:0000250"/>
    <property type="project" value="UniProtKB"/>
</dbReference>
<dbReference type="CDD" id="cd23795">
    <property type="entry name" value="UBCc_UBE2G1"/>
    <property type="match status" value="1"/>
</dbReference>
<dbReference type="FunFam" id="3.10.110.10:FF:000018">
    <property type="entry name" value="Ubiquitin-conjugating enzyme E2 G1"/>
    <property type="match status" value="1"/>
</dbReference>
<dbReference type="Gene3D" id="3.10.110.10">
    <property type="entry name" value="Ubiquitin Conjugating Enzyme"/>
    <property type="match status" value="1"/>
</dbReference>
<dbReference type="InterPro" id="IPR050113">
    <property type="entry name" value="Ub_conjugating_enzyme"/>
</dbReference>
<dbReference type="InterPro" id="IPR000608">
    <property type="entry name" value="UBQ-conjugat_E2_core"/>
</dbReference>
<dbReference type="InterPro" id="IPR023313">
    <property type="entry name" value="UBQ-conjugating_AS"/>
</dbReference>
<dbReference type="InterPro" id="IPR016135">
    <property type="entry name" value="UBQ-conjugating_enzyme/RWD"/>
</dbReference>
<dbReference type="PANTHER" id="PTHR24067">
    <property type="entry name" value="UBIQUITIN-CONJUGATING ENZYME E2"/>
    <property type="match status" value="1"/>
</dbReference>
<dbReference type="Pfam" id="PF00179">
    <property type="entry name" value="UQ_con"/>
    <property type="match status" value="1"/>
</dbReference>
<dbReference type="SMART" id="SM00212">
    <property type="entry name" value="UBCc"/>
    <property type="match status" value="1"/>
</dbReference>
<dbReference type="SUPFAM" id="SSF54495">
    <property type="entry name" value="UBC-like"/>
    <property type="match status" value="1"/>
</dbReference>
<dbReference type="PROSITE" id="PS00183">
    <property type="entry name" value="UBC_1"/>
    <property type="match status" value="1"/>
</dbReference>
<dbReference type="PROSITE" id="PS50127">
    <property type="entry name" value="UBC_2"/>
    <property type="match status" value="1"/>
</dbReference>
<keyword id="KW-0007">Acetylation</keyword>
<keyword id="KW-0067">ATP-binding</keyword>
<keyword id="KW-0547">Nucleotide-binding</keyword>
<keyword id="KW-1185">Reference proteome</keyword>
<keyword id="KW-0808">Transferase</keyword>
<keyword id="KW-0832">Ubl conjugation</keyword>
<keyword id="KW-0833">Ubl conjugation pathway</keyword>
<protein>
    <recommendedName>
        <fullName>Ubiquitin-conjugating enzyme E2 G1</fullName>
        <ecNumber>2.3.2.23</ecNumber>
    </recommendedName>
    <alternativeName>
        <fullName>E2 ubiquitin-conjugating enzyme G1</fullName>
    </alternativeName>
    <alternativeName>
        <fullName>E217K</fullName>
    </alternativeName>
    <alternativeName>
        <fullName>UBC7</fullName>
    </alternativeName>
    <alternativeName>
        <fullName>Ubiquitin carrier protein G1</fullName>
    </alternativeName>
    <alternativeName>
        <fullName>Ubiquitin-protein ligase G1</fullName>
    </alternativeName>
    <component>
        <recommendedName>
            <fullName>Ubiquitin-conjugating enzyme E2 G1, N-terminally processed</fullName>
        </recommendedName>
    </component>
</protein>